<dbReference type="EMBL" id="X69393">
    <property type="protein sequence ID" value="CAA49190.1"/>
    <property type="molecule type" value="mRNA"/>
</dbReference>
<dbReference type="EMBL" id="L06009">
    <property type="protein sequence ID" value="AAA20134.1"/>
    <property type="molecule type" value="mRNA"/>
</dbReference>
<dbReference type="PIR" id="S31391">
    <property type="entry name" value="S31391"/>
</dbReference>
<dbReference type="RefSeq" id="NP_001078902.1">
    <property type="nucleotide sequence ID" value="NM_001085433.2"/>
</dbReference>
<dbReference type="SMR" id="P37997"/>
<dbReference type="FunCoup" id="P37997">
    <property type="interactions" value="120"/>
</dbReference>
<dbReference type="STRING" id="9796.ENSECAP00000013353"/>
<dbReference type="GlyCosmos" id="P37997">
    <property type="glycosylation" value="2 sites, No reported glycans"/>
</dbReference>
<dbReference type="PaxDb" id="9796-ENSECAP00000013353"/>
<dbReference type="GeneID" id="100034204"/>
<dbReference type="KEGG" id="ecb:100034204"/>
<dbReference type="CTD" id="3558"/>
<dbReference type="InParanoid" id="P37997"/>
<dbReference type="OrthoDB" id="9450228at2759"/>
<dbReference type="Proteomes" id="UP000002281">
    <property type="component" value="Unplaced"/>
</dbReference>
<dbReference type="GO" id="GO:0005615">
    <property type="term" value="C:extracellular space"/>
    <property type="evidence" value="ECO:0000318"/>
    <property type="project" value="GO_Central"/>
</dbReference>
<dbReference type="GO" id="GO:0005125">
    <property type="term" value="F:cytokine activity"/>
    <property type="evidence" value="ECO:0000318"/>
    <property type="project" value="GO_Central"/>
</dbReference>
<dbReference type="GO" id="GO:0008083">
    <property type="term" value="F:growth factor activity"/>
    <property type="evidence" value="ECO:0007669"/>
    <property type="project" value="UniProtKB-KW"/>
</dbReference>
<dbReference type="GO" id="GO:0005134">
    <property type="term" value="F:interleukin-2 receptor binding"/>
    <property type="evidence" value="ECO:0000318"/>
    <property type="project" value="GO_Central"/>
</dbReference>
<dbReference type="GO" id="GO:0002250">
    <property type="term" value="P:adaptive immune response"/>
    <property type="evidence" value="ECO:0007669"/>
    <property type="project" value="UniProtKB-KW"/>
</dbReference>
<dbReference type="GO" id="GO:0038110">
    <property type="term" value="P:interleukin-2-mediated signaling pathway"/>
    <property type="evidence" value="ECO:0000318"/>
    <property type="project" value="GO_Central"/>
</dbReference>
<dbReference type="Gene3D" id="1.20.1250.10">
    <property type="match status" value="1"/>
</dbReference>
<dbReference type="InterPro" id="IPR009079">
    <property type="entry name" value="4_helix_cytokine-like_core"/>
</dbReference>
<dbReference type="InterPro" id="IPR000779">
    <property type="entry name" value="IL-2"/>
</dbReference>
<dbReference type="InterPro" id="IPR030477">
    <property type="entry name" value="IL-2_CS"/>
</dbReference>
<dbReference type="PANTHER" id="PTHR48487">
    <property type="entry name" value="INTERLEUKIN-2"/>
    <property type="match status" value="1"/>
</dbReference>
<dbReference type="PANTHER" id="PTHR48487:SF1">
    <property type="entry name" value="INTERLEUKIN-2"/>
    <property type="match status" value="1"/>
</dbReference>
<dbReference type="Pfam" id="PF00715">
    <property type="entry name" value="IL2"/>
    <property type="match status" value="1"/>
</dbReference>
<dbReference type="PRINTS" id="PR00265">
    <property type="entry name" value="INTERLEUKIN2"/>
</dbReference>
<dbReference type="SMART" id="SM00189">
    <property type="entry name" value="IL2"/>
    <property type="match status" value="1"/>
</dbReference>
<dbReference type="SUPFAM" id="SSF47266">
    <property type="entry name" value="4-helical cytokines"/>
    <property type="match status" value="1"/>
</dbReference>
<dbReference type="PROSITE" id="PS00424">
    <property type="entry name" value="INTERLEUKIN_2"/>
    <property type="match status" value="1"/>
</dbReference>
<reference key="1">
    <citation type="journal article" date="1993" name="Equine Vet. J.">
        <title>cDNA cloning of equine interleukin-2 by polymerase chain reaction.</title>
        <authorList>
            <person name="Tavernor A.S."/>
            <person name="Allen W.R."/>
            <person name="Butcher G.W."/>
        </authorList>
    </citation>
    <scope>NUCLEOTIDE SEQUENCE [MRNA]</scope>
</reference>
<reference key="2">
    <citation type="journal article" date="1993" name="Vet. Immunol. Immunopathol.">
        <title>Molecular cloning and expression of equine interleukin 2.</title>
        <authorList>
            <person name="Vandergrifft E.V."/>
            <person name="Horohov D.W."/>
        </authorList>
    </citation>
    <scope>NUCLEOTIDE SEQUENCE [MRNA]</scope>
</reference>
<evidence type="ECO:0000250" key="1"/>
<evidence type="ECO:0000250" key="2">
    <source>
        <dbReference type="UniProtKB" id="P60568"/>
    </source>
</evidence>
<evidence type="ECO:0000255" key="3"/>
<evidence type="ECO:0000305" key="4"/>
<gene>
    <name type="primary">IL2</name>
</gene>
<organism>
    <name type="scientific">Equus caballus</name>
    <name type="common">Horse</name>
    <dbReference type="NCBI Taxonomy" id="9796"/>
    <lineage>
        <taxon>Eukaryota</taxon>
        <taxon>Metazoa</taxon>
        <taxon>Chordata</taxon>
        <taxon>Craniata</taxon>
        <taxon>Vertebrata</taxon>
        <taxon>Euteleostomi</taxon>
        <taxon>Mammalia</taxon>
        <taxon>Eutheria</taxon>
        <taxon>Laurasiatheria</taxon>
        <taxon>Perissodactyla</taxon>
        <taxon>Equidae</taxon>
        <taxon>Equus</taxon>
    </lineage>
</organism>
<feature type="signal peptide" evidence="1">
    <location>
        <begin position="1"/>
        <end position="20"/>
    </location>
</feature>
<feature type="chain" id="PRO_0000015483" description="Interleukin-2">
    <location>
        <begin position="21"/>
        <end position="149"/>
    </location>
</feature>
<feature type="glycosylation site" description="O-linked (GalNAc...) threonine" evidence="1">
    <location>
        <position position="23"/>
    </location>
</feature>
<feature type="glycosylation site" description="N-linked (GlcNAc...) asparagine" evidence="3">
    <location>
        <position position="106"/>
    </location>
</feature>
<feature type="disulfide bond" evidence="1">
    <location>
        <begin position="78"/>
        <end position="121"/>
    </location>
</feature>
<feature type="sequence conflict" description="In Ref. 2; CAA49190." evidence="4" ref="2">
    <original>R</original>
    <variation>K</variation>
    <location>
        <position position="3"/>
    </location>
</feature>
<feature type="sequence conflict" description="In Ref. 2; CAA49190." evidence="4" ref="2">
    <original>S</original>
    <variation>A</variation>
    <location>
        <position position="8"/>
    </location>
</feature>
<feature type="sequence conflict" description="In Ref. 2; CAA49190." evidence="4" ref="2">
    <original>I</original>
    <variation>M</variation>
    <location>
        <position position="59"/>
    </location>
</feature>
<feature type="sequence conflict" description="In Ref. 2; CAA49190." evidence="4" ref="2">
    <original>N</original>
    <variation>D</variation>
    <location>
        <position position="125"/>
    </location>
</feature>
<feature type="sequence conflict" description="In Ref. 2; CAA49190." evidence="4" ref="2">
    <original>E</original>
    <variation>G</variation>
    <location>
        <position position="128"/>
    </location>
</feature>
<feature type="sequence conflict" description="In Ref. 2; CAA49190." evidence="4" ref="2">
    <original>I</original>
    <variation>F</variation>
    <location>
        <position position="145"/>
    </location>
</feature>
<feature type="sequence conflict" description="In Ref. 2; CAA49190." evidence="4" ref="2">
    <original>L</original>
    <variation>M</variation>
    <location>
        <position position="148"/>
    </location>
</feature>
<proteinExistence type="evidence at transcript level"/>
<protein>
    <recommendedName>
        <fullName>Interleukin-2</fullName>
        <shortName>IL-2</shortName>
    </recommendedName>
    <alternativeName>
        <fullName>T-cell growth factor</fullName>
        <shortName>TCGF</shortName>
    </alternativeName>
</protein>
<sequence>MYRMQLLSCIALTLAVLANSAPTSSSKRETQQQLKQLQMDLKLLLEGVNNNKNPKLSKILTFKINMPKKATELKHLQCLEEELKPLEEMLKNFLSKDIKELMSNINVTVLGLKGSETRFTCEYDNETETIVEFLNKWITFCQSIISTLT</sequence>
<comment type="function">
    <text evidence="2">Cytokine produced by activated CD4-positive helper T-cells and to a lesser extend activated CD8-positive T-cells and natural killer (NK) cells that plays pivotal roles in the immune response and tolerance. Binds to a receptor complex composed of either the high-affinity trimeric IL-2R (IL2RA/CD25, IL2RB/CD122 and IL2RG/CD132) or the low-affinity dimeric IL-2R (IL2RB and IL2RG). Interaction with the receptor leads to oligomerization and conformation changes in the IL-2R subunits resulting in downstream signaling starting with phosphorylation of JAK1 and JAK3. In turn, JAK1 and JAK3 phosphorylate the receptor to form a docking site leading to the phosphorylation of several substrates including STAT5. This process leads to activation of several pathways including STAT, phosphoinositide-3-kinase/PI3K and mitogen-activated protein kinase/MAPK pathways. Functions as a T-cell growth factor and can increase NK-cell cytolytic activity as well. Promotes strong proliferation of activated B-cells and subsequently immunoglobulin production. Plays a pivotal role in regulating the adaptive immune system by controlling the survival and proliferation of regulatory T-cells, which are required for the maintenance of immune tolerance. Moreover, participates in the differentiation and homeostasis of effector T-cell subsets, including Th1, Th2, Th17 as well as memory CD8-positive T-cells.</text>
</comment>
<comment type="subcellular location">
    <subcellularLocation>
        <location>Secreted</location>
    </subcellularLocation>
</comment>
<comment type="similarity">
    <text evidence="4">Belongs to the IL-2 family.</text>
</comment>
<name>IL2_HORSE</name>
<keyword id="KW-1064">Adaptive immunity</keyword>
<keyword id="KW-0202">Cytokine</keyword>
<keyword id="KW-1015">Disulfide bond</keyword>
<keyword id="KW-0325">Glycoprotein</keyword>
<keyword id="KW-0339">Growth factor</keyword>
<keyword id="KW-0391">Immunity</keyword>
<keyword id="KW-1185">Reference proteome</keyword>
<keyword id="KW-0964">Secreted</keyword>
<keyword id="KW-0732">Signal</keyword>
<accession>P37997</accession>